<gene>
    <name type="ordered locus">AF_2138</name>
</gene>
<reference key="1">
    <citation type="journal article" date="1997" name="Nature">
        <title>The complete genome sequence of the hyperthermophilic, sulphate-reducing archaeon Archaeoglobus fulgidus.</title>
        <authorList>
            <person name="Klenk H.-P."/>
            <person name="Clayton R.A."/>
            <person name="Tomb J.-F."/>
            <person name="White O."/>
            <person name="Nelson K.E."/>
            <person name="Ketchum K.A."/>
            <person name="Dodson R.J."/>
            <person name="Gwinn M.L."/>
            <person name="Hickey E.K."/>
            <person name="Peterson J.D."/>
            <person name="Richardson D.L."/>
            <person name="Kerlavage A.R."/>
            <person name="Graham D.E."/>
            <person name="Kyrpides N.C."/>
            <person name="Fleischmann R.D."/>
            <person name="Quackenbush J."/>
            <person name="Lee N.H."/>
            <person name="Sutton G.G."/>
            <person name="Gill S.R."/>
            <person name="Kirkness E.F."/>
            <person name="Dougherty B.A."/>
            <person name="McKenney K."/>
            <person name="Adams M.D."/>
            <person name="Loftus B.J."/>
            <person name="Peterson S.N."/>
            <person name="Reich C.I."/>
            <person name="McNeil L.K."/>
            <person name="Badger J.H."/>
            <person name="Glodek A."/>
            <person name="Zhou L."/>
            <person name="Overbeek R."/>
            <person name="Gocayne J.D."/>
            <person name="Weidman J.F."/>
            <person name="McDonald L.A."/>
            <person name="Utterback T.R."/>
            <person name="Cotton M.D."/>
            <person name="Spriggs T."/>
            <person name="Artiach P."/>
            <person name="Kaine B.P."/>
            <person name="Sykes S.M."/>
            <person name="Sadow P.W."/>
            <person name="D'Andrea K.P."/>
            <person name="Bowman C."/>
            <person name="Fujii C."/>
            <person name="Garland S.A."/>
            <person name="Mason T.M."/>
            <person name="Olsen G.J."/>
            <person name="Fraser C.M."/>
            <person name="Smith H.O."/>
            <person name="Woese C.R."/>
            <person name="Venter J.C."/>
        </authorList>
    </citation>
    <scope>NUCLEOTIDE SEQUENCE [LARGE SCALE GENOMIC DNA]</scope>
    <source>
        <strain>ATCC 49558 / DSM 4304 / JCM 9628 / NBRC 100126 / VC-16</strain>
    </source>
</reference>
<protein>
    <recommendedName>
        <fullName>Phosphoserine phosphatase</fullName>
        <shortName>PSP</shortName>
        <shortName>PSPase</shortName>
        <ecNumber>3.1.3.3</ecNumber>
    </recommendedName>
    <alternativeName>
        <fullName>O-phosphoserine phosphohydrolase</fullName>
    </alternativeName>
</protein>
<accession>O28142</accession>
<dbReference type="EC" id="3.1.3.3"/>
<dbReference type="EMBL" id="AE000782">
    <property type="protein sequence ID" value="AAB89113.1"/>
    <property type="molecule type" value="Genomic_DNA"/>
</dbReference>
<dbReference type="PIR" id="B69517">
    <property type="entry name" value="B69517"/>
</dbReference>
<dbReference type="SMR" id="O28142"/>
<dbReference type="STRING" id="224325.AF_2138"/>
<dbReference type="PaxDb" id="224325-AF_2138"/>
<dbReference type="EnsemblBacteria" id="AAB89113">
    <property type="protein sequence ID" value="AAB89113"/>
    <property type="gene ID" value="AF_2138"/>
</dbReference>
<dbReference type="KEGG" id="afu:AF_2138"/>
<dbReference type="eggNOG" id="arCOG01158">
    <property type="taxonomic scope" value="Archaea"/>
</dbReference>
<dbReference type="HOGENOM" id="CLU_036368_4_0_2"/>
<dbReference type="PhylomeDB" id="O28142"/>
<dbReference type="UniPathway" id="UPA00135">
    <property type="reaction ID" value="UER00198"/>
</dbReference>
<dbReference type="Proteomes" id="UP000002199">
    <property type="component" value="Chromosome"/>
</dbReference>
<dbReference type="GO" id="GO:0005737">
    <property type="term" value="C:cytoplasm"/>
    <property type="evidence" value="ECO:0007669"/>
    <property type="project" value="TreeGrafter"/>
</dbReference>
<dbReference type="GO" id="GO:0036424">
    <property type="term" value="F:L-phosphoserine phosphatase activity"/>
    <property type="evidence" value="ECO:0007669"/>
    <property type="project" value="InterPro"/>
</dbReference>
<dbReference type="GO" id="GO:0000287">
    <property type="term" value="F:magnesium ion binding"/>
    <property type="evidence" value="ECO:0007669"/>
    <property type="project" value="TreeGrafter"/>
</dbReference>
<dbReference type="GO" id="GO:0006564">
    <property type="term" value="P:L-serine biosynthetic process"/>
    <property type="evidence" value="ECO:0007669"/>
    <property type="project" value="UniProtKB-KW"/>
</dbReference>
<dbReference type="CDD" id="cd07500">
    <property type="entry name" value="HAD_PSP"/>
    <property type="match status" value="1"/>
</dbReference>
<dbReference type="Gene3D" id="3.40.50.1000">
    <property type="entry name" value="HAD superfamily/HAD-like"/>
    <property type="match status" value="1"/>
</dbReference>
<dbReference type="InterPro" id="IPR045865">
    <property type="entry name" value="ACT-like_dom_sf"/>
</dbReference>
<dbReference type="InterPro" id="IPR002912">
    <property type="entry name" value="ACT_dom"/>
</dbReference>
<dbReference type="InterPro" id="IPR050582">
    <property type="entry name" value="HAD-like_SerB"/>
</dbReference>
<dbReference type="InterPro" id="IPR036412">
    <property type="entry name" value="HAD-like_sf"/>
</dbReference>
<dbReference type="InterPro" id="IPR023214">
    <property type="entry name" value="HAD_sf"/>
</dbReference>
<dbReference type="InterPro" id="IPR004469">
    <property type="entry name" value="PSP"/>
</dbReference>
<dbReference type="NCBIfam" id="TIGR01488">
    <property type="entry name" value="HAD-SF-IB"/>
    <property type="match status" value="1"/>
</dbReference>
<dbReference type="NCBIfam" id="TIGR00338">
    <property type="entry name" value="serB"/>
    <property type="match status" value="1"/>
</dbReference>
<dbReference type="PANTHER" id="PTHR43344">
    <property type="entry name" value="PHOSPHOSERINE PHOSPHATASE"/>
    <property type="match status" value="1"/>
</dbReference>
<dbReference type="PANTHER" id="PTHR43344:SF2">
    <property type="entry name" value="PHOSPHOSERINE PHOSPHATASE"/>
    <property type="match status" value="1"/>
</dbReference>
<dbReference type="Pfam" id="PF01842">
    <property type="entry name" value="ACT"/>
    <property type="match status" value="1"/>
</dbReference>
<dbReference type="Pfam" id="PF00702">
    <property type="entry name" value="Hydrolase"/>
    <property type="match status" value="1"/>
</dbReference>
<dbReference type="SFLD" id="SFLDG01129">
    <property type="entry name" value="C1.5:_HAD__Beta-PGM__Phosphata"/>
    <property type="match status" value="1"/>
</dbReference>
<dbReference type="SFLD" id="SFLDS00003">
    <property type="entry name" value="Haloacid_Dehalogenase"/>
    <property type="match status" value="1"/>
</dbReference>
<dbReference type="SFLD" id="SFLDF00029">
    <property type="entry name" value="phosphoserine_phosphatase"/>
    <property type="match status" value="1"/>
</dbReference>
<dbReference type="SUPFAM" id="SSF55021">
    <property type="entry name" value="ACT-like"/>
    <property type="match status" value="1"/>
</dbReference>
<dbReference type="SUPFAM" id="SSF56784">
    <property type="entry name" value="HAD-like"/>
    <property type="match status" value="1"/>
</dbReference>
<dbReference type="PROSITE" id="PS51671">
    <property type="entry name" value="ACT"/>
    <property type="match status" value="1"/>
</dbReference>
<keyword id="KW-0028">Amino-acid biosynthesis</keyword>
<keyword id="KW-0378">Hydrolase</keyword>
<keyword id="KW-0460">Magnesium</keyword>
<keyword id="KW-0479">Metal-binding</keyword>
<keyword id="KW-1185">Reference proteome</keyword>
<keyword id="KW-0718">Serine biosynthesis</keyword>
<proteinExistence type="inferred from homology"/>
<evidence type="ECO:0000250" key="1"/>
<evidence type="ECO:0000255" key="2">
    <source>
        <dbReference type="PROSITE-ProRule" id="PRU01007"/>
    </source>
</evidence>
<evidence type="ECO:0000305" key="3"/>
<name>SERB_ARCFU</name>
<feature type="chain" id="PRO_0000156890" description="Phosphoserine phosphatase">
    <location>
        <begin position="1"/>
        <end position="344"/>
    </location>
</feature>
<feature type="domain" description="ACT" evidence="2">
    <location>
        <begin position="48"/>
        <end position="120"/>
    </location>
</feature>
<feature type="active site" description="Nucleophile" evidence="1">
    <location>
        <position position="135"/>
    </location>
</feature>
<feature type="active site" description="Proton donor" evidence="1">
    <location>
        <position position="137"/>
    </location>
</feature>
<feature type="binding site" evidence="1">
    <location>
        <position position="135"/>
    </location>
    <ligand>
        <name>Mg(2+)</name>
        <dbReference type="ChEBI" id="CHEBI:18420"/>
    </ligand>
</feature>
<feature type="binding site" evidence="1">
    <location>
        <position position="137"/>
    </location>
    <ligand>
        <name>Mg(2+)</name>
        <dbReference type="ChEBI" id="CHEBI:18420"/>
    </ligand>
</feature>
<feature type="binding site" evidence="1">
    <location>
        <position position="144"/>
    </location>
    <ligand>
        <name>substrate</name>
    </ligand>
</feature>
<feature type="binding site" evidence="1">
    <location>
        <position position="180"/>
    </location>
    <ligand>
        <name>substrate</name>
    </ligand>
</feature>
<feature type="binding site" evidence="1">
    <location>
        <begin position="223"/>
        <end position="224"/>
    </location>
    <ligand>
        <name>substrate</name>
    </ligand>
</feature>
<feature type="binding site" evidence="1">
    <location>
        <position position="268"/>
    </location>
    <ligand>
        <name>substrate</name>
    </ligand>
</feature>
<feature type="binding site" evidence="1">
    <location>
        <position position="291"/>
    </location>
    <ligand>
        <name>Mg(2+)</name>
        <dbReference type="ChEBI" id="CHEBI:18420"/>
    </ligand>
</feature>
<sequence length="344" mass="38515">MFVMFIVAEVDDEVCVKREVERAAGEVGVHVSLTPFQRREKAEKNLYVVTILGKDRVGIVRDITRAFLDFGINIERTSLTAREELISIEFLVDLGQRDAAEVRKRLRREAERLGLDIVMQPYSTFNREKRLIVFDMDSTLVEAEIIDELAKEAGVGDEVSKLTERAMRGEIGFKEALEERVRLLKGLPVEVLERIYSRIKLTEGAKELVRSLKEAGYKVAVVSGGFSYFTDRLKEELGLDYAFGNELEIENGRLTGRIKGRIIDASEKARIVEEIARKEGISPENVVAVGDGANDRLMIERAGLGIAFNAKEVLKDVADGSISKENLVGLASVLKLPAEFRKKV</sequence>
<organism>
    <name type="scientific">Archaeoglobus fulgidus (strain ATCC 49558 / DSM 4304 / JCM 9628 / NBRC 100126 / VC-16)</name>
    <dbReference type="NCBI Taxonomy" id="224325"/>
    <lineage>
        <taxon>Archaea</taxon>
        <taxon>Methanobacteriati</taxon>
        <taxon>Methanobacteriota</taxon>
        <taxon>Archaeoglobi</taxon>
        <taxon>Archaeoglobales</taxon>
        <taxon>Archaeoglobaceae</taxon>
        <taxon>Archaeoglobus</taxon>
    </lineage>
</organism>
<comment type="catalytic activity">
    <reaction>
        <text>O-phospho-L-serine + H2O = L-serine + phosphate</text>
        <dbReference type="Rhea" id="RHEA:21208"/>
        <dbReference type="ChEBI" id="CHEBI:15377"/>
        <dbReference type="ChEBI" id="CHEBI:33384"/>
        <dbReference type="ChEBI" id="CHEBI:43474"/>
        <dbReference type="ChEBI" id="CHEBI:57524"/>
        <dbReference type="EC" id="3.1.3.3"/>
    </reaction>
</comment>
<comment type="catalytic activity">
    <reaction>
        <text>O-phospho-D-serine + H2O = D-serine + phosphate</text>
        <dbReference type="Rhea" id="RHEA:24873"/>
        <dbReference type="ChEBI" id="CHEBI:15377"/>
        <dbReference type="ChEBI" id="CHEBI:35247"/>
        <dbReference type="ChEBI" id="CHEBI:43474"/>
        <dbReference type="ChEBI" id="CHEBI:58680"/>
        <dbReference type="EC" id="3.1.3.3"/>
    </reaction>
</comment>
<comment type="cofactor">
    <cofactor evidence="1">
        <name>Mg(2+)</name>
        <dbReference type="ChEBI" id="CHEBI:18420"/>
    </cofactor>
    <text evidence="1">Binds 1 Mg(2+) ion per subunit.</text>
</comment>
<comment type="pathway">
    <text>Amino-acid biosynthesis; L-serine biosynthesis; L-serine from 3-phospho-D-glycerate: step 3/3.</text>
</comment>
<comment type="similarity">
    <text evidence="3">Belongs to the HAD-like hydrolase superfamily. SerB family.</text>
</comment>